<sequence>MRSTTLLALLALVLLYLVSGALVFQALEQPHEQQAQKKMDHGRDQFLRDHPCVSQKSLEDFIKLLVEALGGGANPETSWTNSSNHSSAWNLGSAFFFSGTIITTIGYGNIVLHTDAGRLFCIFYALVGIPLFGMLLAGVGDRLGSSLRRGIGHIEAIFLKWHVPPGLVRSLSAVLFLLIGCLLFVLTPTFVFSYMESWSKLEAIYFVIVTLTTVGFGDYVPGDGTGQNSPAYQPLVWFWILFGLAYFASVLTTIGNWLRAVSRRTRAEMGGLTAQAASWTGTVTARVTQRTGPSAPPPEKEQPLLPSSLPAPPAVVEPAGRPGSPAPAEKVETPSPPTASALDYPSENLAFIDESSDTQSERGCALPRAPRGRRRPNPSKKPSRPRGPGRLRDKAVPV</sequence>
<feature type="chain" id="PRO_0000101748" description="Potassium channel subfamily K member 4">
    <location>
        <begin position="1"/>
        <end position="398"/>
    </location>
</feature>
<feature type="topological domain" description="Cytoplasmic" evidence="3">
    <location>
        <begin position="1"/>
        <end position="3"/>
    </location>
</feature>
<feature type="transmembrane region" description="Helical" evidence="3">
    <location>
        <begin position="4"/>
        <end position="24"/>
    </location>
</feature>
<feature type="topological domain" description="Extracellular" evidence="3">
    <location>
        <begin position="25"/>
        <end position="88"/>
    </location>
</feature>
<feature type="intramembrane region" description="Helical; Name=Pore helix 1" evidence="3">
    <location>
        <begin position="89"/>
        <end position="103"/>
    </location>
</feature>
<feature type="intramembrane region" evidence="3">
    <location>
        <begin position="104"/>
        <end position="110"/>
    </location>
</feature>
<feature type="topological domain" description="Extracellular" evidence="3">
    <location>
        <begin position="111"/>
        <end position="118"/>
    </location>
</feature>
<feature type="transmembrane region" description="Helical" evidence="3">
    <location>
        <begin position="119"/>
        <end position="151"/>
    </location>
</feature>
<feature type="topological domain" description="Cytoplasmic" evidence="3">
    <location>
        <begin position="152"/>
        <end position="173"/>
    </location>
</feature>
<feature type="transmembrane region" description="Helical" evidence="3">
    <location>
        <begin position="174"/>
        <end position="195"/>
    </location>
</feature>
<feature type="topological domain" description="Extracellular" evidence="3">
    <location>
        <begin position="196"/>
        <end position="200"/>
    </location>
</feature>
<feature type="intramembrane region" description="Helical; Name=Pore helix 2" evidence="3">
    <location>
        <begin position="201"/>
        <end position="214"/>
    </location>
</feature>
<feature type="intramembrane region" evidence="3">
    <location>
        <begin position="215"/>
        <end position="220"/>
    </location>
</feature>
<feature type="topological domain" description="Extracellular" evidence="3">
    <location>
        <begin position="221"/>
        <end position="234"/>
    </location>
</feature>
<feature type="transmembrane region" description="Helical" evidence="3">
    <location>
        <begin position="235"/>
        <end position="261"/>
    </location>
</feature>
<feature type="topological domain" description="Cytoplasmic" evidence="3">
    <location>
        <begin position="262"/>
        <end position="398"/>
    </location>
</feature>
<feature type="region of interest" description="Selectivity filter 1" evidence="3">
    <location>
        <begin position="104"/>
        <end position="109"/>
    </location>
</feature>
<feature type="region of interest" description="Selectivity filter 2" evidence="3">
    <location>
        <begin position="213"/>
        <end position="218"/>
    </location>
</feature>
<feature type="region of interest" description="Disordered" evidence="5">
    <location>
        <begin position="282"/>
        <end position="398"/>
    </location>
</feature>
<feature type="compositionally biased region" description="Polar residues" evidence="5">
    <location>
        <begin position="282"/>
        <end position="292"/>
    </location>
</feature>
<feature type="compositionally biased region" description="Basic residues" evidence="5">
    <location>
        <begin position="370"/>
        <end position="389"/>
    </location>
</feature>
<feature type="binding site" evidence="2">
    <location>
        <position position="104"/>
    </location>
    <ligand>
        <name>K(+)</name>
        <dbReference type="ChEBI" id="CHEBI:29103"/>
        <label>1</label>
    </ligand>
</feature>
<feature type="binding site" evidence="2">
    <location>
        <position position="104"/>
    </location>
    <ligand>
        <name>K(+)</name>
        <dbReference type="ChEBI" id="CHEBI:29103"/>
        <label>4</label>
    </ligand>
</feature>
<feature type="binding site" evidence="2">
    <location>
        <position position="105"/>
    </location>
    <ligand>
        <name>K(+)</name>
        <dbReference type="ChEBI" id="CHEBI:29103"/>
        <label>1</label>
    </ligand>
</feature>
<feature type="binding site" evidence="2">
    <location>
        <position position="105"/>
    </location>
    <ligand>
        <name>K(+)</name>
        <dbReference type="ChEBI" id="CHEBI:29103"/>
        <label>2</label>
    </ligand>
</feature>
<feature type="binding site" evidence="2">
    <location>
        <position position="106"/>
    </location>
    <ligand>
        <name>K(+)</name>
        <dbReference type="ChEBI" id="CHEBI:29103"/>
        <label>2</label>
    </ligand>
</feature>
<feature type="binding site" evidence="2">
    <location>
        <position position="106"/>
    </location>
    <ligand>
        <name>K(+)</name>
        <dbReference type="ChEBI" id="CHEBI:29103"/>
        <label>3</label>
    </ligand>
</feature>
<feature type="binding site" evidence="2">
    <location>
        <position position="107"/>
    </location>
    <ligand>
        <name>K(+)</name>
        <dbReference type="ChEBI" id="CHEBI:29103"/>
        <label>3</label>
    </ligand>
</feature>
<feature type="binding site" evidence="2">
    <location>
        <position position="213"/>
    </location>
    <ligand>
        <name>K(+)</name>
        <dbReference type="ChEBI" id="CHEBI:29103"/>
        <label>1</label>
    </ligand>
</feature>
<feature type="binding site" evidence="2">
    <location>
        <position position="213"/>
    </location>
    <ligand>
        <name>K(+)</name>
        <dbReference type="ChEBI" id="CHEBI:29103"/>
        <label>4</label>
    </ligand>
</feature>
<feature type="binding site" evidence="2">
    <location>
        <position position="214"/>
    </location>
    <ligand>
        <name>K(+)</name>
        <dbReference type="ChEBI" id="CHEBI:29103"/>
        <label>1</label>
    </ligand>
</feature>
<feature type="binding site" evidence="2">
    <location>
        <position position="214"/>
    </location>
    <ligand>
        <name>K(+)</name>
        <dbReference type="ChEBI" id="CHEBI:29103"/>
        <label>2</label>
    </ligand>
</feature>
<feature type="binding site" evidence="2">
    <location>
        <position position="215"/>
    </location>
    <ligand>
        <name>K(+)</name>
        <dbReference type="ChEBI" id="CHEBI:29103"/>
        <label>2</label>
    </ligand>
</feature>
<feature type="binding site" evidence="2">
    <location>
        <position position="215"/>
    </location>
    <ligand>
        <name>K(+)</name>
        <dbReference type="ChEBI" id="CHEBI:29103"/>
        <label>3</label>
    </ligand>
</feature>
<feature type="binding site" evidence="2">
    <location>
        <position position="216"/>
    </location>
    <ligand>
        <name>K(+)</name>
        <dbReference type="ChEBI" id="CHEBI:29103"/>
        <label>3</label>
    </ligand>
</feature>
<feature type="glycosylation site" description="N-linked (GlcNAc...) asparagine" evidence="4">
    <location>
        <position position="81"/>
    </location>
</feature>
<feature type="glycosylation site" description="N-linked (GlcNAc...) asparagine" evidence="4">
    <location>
        <position position="84"/>
    </location>
</feature>
<feature type="disulfide bond" description="Interchain (with C-52)" evidence="3">
    <location>
        <position position="52"/>
    </location>
</feature>
<feature type="splice variant" id="VSP_006690" description="In isoform 2." evidence="12">
    <original>KLLVE</original>
    <variation>KAMAI</variation>
    <location>
        <begin position="63"/>
        <end position="67"/>
    </location>
</feature>
<feature type="splice variant" id="VSP_006691" description="In isoform 2." evidence="12">
    <location>
        <begin position="68"/>
        <end position="398"/>
    </location>
</feature>
<feature type="mutagenesis site" description="Decreased channel conductance. Acts as a dominant negative when it assembles with the wild-type subunit. Inactivates KCNK2, KCNK10, and KCNK4 currents by 49%, 32% and 57% respectively. Has weak inhibitory effect on KCNK13, KCNK1 and KCNK9 currents." evidence="9">
    <original>G</original>
    <variation>E</variation>
    <location>
        <position position="106"/>
    </location>
</feature>
<feature type="helix" evidence="14">
    <location>
        <begin position="3"/>
        <end position="28"/>
    </location>
</feature>
<feature type="helix" evidence="14">
    <location>
        <begin position="29"/>
        <end position="31"/>
    </location>
</feature>
<feature type="helix" evidence="14">
    <location>
        <begin position="34"/>
        <end position="49"/>
    </location>
</feature>
<feature type="helix" evidence="14">
    <location>
        <begin position="55"/>
        <end position="71"/>
    </location>
</feature>
<feature type="helix" evidence="14">
    <location>
        <begin position="91"/>
        <end position="102"/>
    </location>
</feature>
<feature type="helix" evidence="14">
    <location>
        <begin position="115"/>
        <end position="151"/>
    </location>
</feature>
<feature type="helix" evidence="14">
    <location>
        <begin position="152"/>
        <end position="154"/>
    </location>
</feature>
<feature type="helix" evidence="14">
    <location>
        <begin position="155"/>
        <end position="160"/>
    </location>
</feature>
<feature type="turn" evidence="14">
    <location>
        <begin position="165"/>
        <end position="167"/>
    </location>
</feature>
<feature type="helix" evidence="14">
    <location>
        <begin position="168"/>
        <end position="184"/>
    </location>
</feature>
<feature type="helix" evidence="14">
    <location>
        <begin position="186"/>
        <end position="195"/>
    </location>
</feature>
<feature type="helix" evidence="14">
    <location>
        <begin position="200"/>
        <end position="211"/>
    </location>
</feature>
<feature type="strand" evidence="14">
    <location>
        <begin position="217"/>
        <end position="219"/>
    </location>
</feature>
<feature type="helix" evidence="14">
    <location>
        <begin position="234"/>
        <end position="257"/>
    </location>
</feature>
<proteinExistence type="evidence at protein level"/>
<organism>
    <name type="scientific">Mus musculus</name>
    <name type="common">Mouse</name>
    <dbReference type="NCBI Taxonomy" id="10090"/>
    <lineage>
        <taxon>Eukaryota</taxon>
        <taxon>Metazoa</taxon>
        <taxon>Chordata</taxon>
        <taxon>Craniata</taxon>
        <taxon>Vertebrata</taxon>
        <taxon>Euteleostomi</taxon>
        <taxon>Mammalia</taxon>
        <taxon>Eutheria</taxon>
        <taxon>Euarchontoglires</taxon>
        <taxon>Glires</taxon>
        <taxon>Rodentia</taxon>
        <taxon>Myomorpha</taxon>
        <taxon>Muroidea</taxon>
        <taxon>Muridae</taxon>
        <taxon>Murinae</taxon>
        <taxon>Mus</taxon>
        <taxon>Mus</taxon>
    </lineage>
</organism>
<gene>
    <name evidence="13" type="primary">Kcnk4</name>
    <name type="synonym">Traak</name>
</gene>
<evidence type="ECO:0000250" key="1">
    <source>
        <dbReference type="UniProtKB" id="G3V8V5"/>
    </source>
</evidence>
<evidence type="ECO:0000250" key="2">
    <source>
        <dbReference type="UniProtKB" id="P57789"/>
    </source>
</evidence>
<evidence type="ECO:0000250" key="3">
    <source>
        <dbReference type="UniProtKB" id="Q9NYG8"/>
    </source>
</evidence>
<evidence type="ECO:0000255" key="4"/>
<evidence type="ECO:0000256" key="5">
    <source>
        <dbReference type="SAM" id="MobiDB-lite"/>
    </source>
</evidence>
<evidence type="ECO:0000269" key="6">
    <source>
    </source>
</evidence>
<evidence type="ECO:0000269" key="7">
    <source>
    </source>
</evidence>
<evidence type="ECO:0000269" key="8">
    <source>
    </source>
</evidence>
<evidence type="ECO:0000269" key="9">
    <source>
    </source>
</evidence>
<evidence type="ECO:0000269" key="10">
    <source>
    </source>
</evidence>
<evidence type="ECO:0000303" key="11">
    <source>
    </source>
</evidence>
<evidence type="ECO:0000305" key="12"/>
<evidence type="ECO:0000312" key="13">
    <source>
        <dbReference type="MGI" id="MGI:1298234"/>
    </source>
</evidence>
<evidence type="ECO:0007829" key="14">
    <source>
        <dbReference type="PDB" id="6PIS"/>
    </source>
</evidence>
<comment type="function">
    <text evidence="1 3 7 8 9 10">K(+) channel that conducts voltage-dependent outward rectifying currents upon membrane depolarization. Voltage sensing is coupled to K(+) electrochemical gradient in an 'ion flux gating' mode where outward but not inward ion flow opens the gate. Converts to voltage-independent 'leak' conductance mode upon stimulation by various stimuli including mechanical membrane stretch, basic pH, temperature and lipids (PubMed:9628867). Homo- and heterodimerizes to form functional channels with distinct regulatory and gating properties (PubMed:27035963, PubMed:27035965). At trigeminal A-beta afferent nerves, the heterodimer of KCNK2/TREK-1 and KCNK4/TRAAK is mostly coexpressed at nodes of Ranvier where it conducts voltage-independent mechanosensitive and thermosensitive currents, allowing rapid action potential repolarization, high speed and high frequence saltatory conduction on myelinated nerves to ensure prompt sensory responses (By similarity) (PubMed:19279663). Permeable to other monovalent cations such as Rb(+) and Cs(+) (By similarity).</text>
</comment>
<comment type="catalytic activity">
    <reaction evidence="8 9 10">
        <text>K(+)(in) = K(+)(out)</text>
        <dbReference type="Rhea" id="RHEA:29463"/>
        <dbReference type="ChEBI" id="CHEBI:29103"/>
    </reaction>
</comment>
<comment type="catalytic activity">
    <reaction evidence="3">
        <text>Rb(+)(in) = Rb(+)(out)</text>
        <dbReference type="Rhea" id="RHEA:78547"/>
        <dbReference type="ChEBI" id="CHEBI:49847"/>
    </reaction>
</comment>
<comment type="catalytic activity">
    <reaction evidence="3">
        <text>Cs(+)(in) = Cs(+)(out)</text>
        <dbReference type="Rhea" id="RHEA:78555"/>
        <dbReference type="ChEBI" id="CHEBI:49547"/>
    </reaction>
</comment>
<comment type="activity regulation">
    <text evidence="6 8 10">Activated by arachidonic acid and other polyunsaturated fatty acids (PubMed:9628867). Not affected by volatile general anesthetics such as chloroform, diethyl ether, halothane and isoflurane (PubMed:10321245). Activated at intracellular and extracellular basic pHs.</text>
</comment>
<comment type="subunit">
    <text evidence="8 9">Homodimer; disulfide-linked. Forms heterodimers with other 2-pore domain K(+) channel subunits, such as KCNK2 and KCNK10.</text>
</comment>
<comment type="subcellular location">
    <subcellularLocation>
        <location evidence="9 10">Cell membrane</location>
        <topology evidence="4">Multi-pass membrane protein</topology>
    </subcellularLocation>
    <subcellularLocation>
        <location evidence="1">Cell projection</location>
        <location evidence="1">Axon</location>
    </subcellularLocation>
    <text evidence="1">Localizes at the Ranvier nodes of myelinated afferent nerves.</text>
</comment>
<comment type="alternative products">
    <event type="alternative splicing"/>
    <isoform>
        <id>O88454-1</id>
        <name>1</name>
        <sequence type="displayed"/>
    </isoform>
    <isoform>
        <id>O88454-2</id>
        <name>2</name>
        <name>TRAAKT</name>
        <name>Truncated</name>
        <sequence type="described" ref="VSP_006690 VSP_006691"/>
    </isoform>
</comment>
<comment type="tissue specificity">
    <text evidence="10">Expressed in brain, spinal cord and eye. Not detected in heart, skeletal muscle, liver, lungs, kidney and testis.</text>
</comment>
<comment type="domain">
    <text evidence="2">Each subunit contributes two pore-forming domains 1 and 2 which assemble to form a single pore with M2 and M4 transmembrane helices lining the central cavity and M1 and M3 facing the lipid bilayer. The transmembrane helices are bridged by the selectivity filters 1 and 2 carrying a signature sequence TxTTxGYGD that coordinate the permeant ions. Up to four ions can simultaneously occupy the selectivity filter and at least two elementary charges must translocate across the filter to convert it into the open conformation.</text>
</comment>
<comment type="domain">
    <text evidence="3">Channel opening is brought about by a conformation change that involves buckling of the second transmembrane helix and affects the position and orientation of the fourth transmembrane helix.</text>
</comment>
<comment type="PTM">
    <text evidence="3">N-glycosylated.</text>
</comment>
<comment type="disruption phenotype">
    <text evidence="7">Mutant mice show increased sensitivity to pain caused by pressure, but also by heat.</text>
</comment>
<comment type="similarity">
    <text evidence="12">Belongs to the two pore domain potassium channel (TC 1.A.1.8) family.</text>
</comment>
<keyword id="KW-0002">3D-structure</keyword>
<keyword id="KW-0025">Alternative splicing</keyword>
<keyword id="KW-1003">Cell membrane</keyword>
<keyword id="KW-0966">Cell projection</keyword>
<keyword id="KW-1015">Disulfide bond</keyword>
<keyword id="KW-0325">Glycoprotein</keyword>
<keyword id="KW-0407">Ion channel</keyword>
<keyword id="KW-0406">Ion transport</keyword>
<keyword id="KW-0472">Membrane</keyword>
<keyword id="KW-0479">Metal-binding</keyword>
<keyword id="KW-0630">Potassium</keyword>
<keyword id="KW-0631">Potassium channel</keyword>
<keyword id="KW-0633">Potassium transport</keyword>
<keyword id="KW-1185">Reference proteome</keyword>
<keyword id="KW-0812">Transmembrane</keyword>
<keyword id="KW-1133">Transmembrane helix</keyword>
<keyword id="KW-0813">Transport</keyword>
<keyword id="KW-0851">Voltage-gated channel</keyword>
<dbReference type="EMBL" id="AF056492">
    <property type="protein sequence ID" value="AAC40181.1"/>
    <property type="molecule type" value="mRNA"/>
</dbReference>
<dbReference type="CCDS" id="CCDS29511.1">
    <molecule id="O88454-1"/>
</dbReference>
<dbReference type="RefSeq" id="NP_001390841.1">
    <molecule id="O88454-1"/>
    <property type="nucleotide sequence ID" value="NM_001403912.1"/>
</dbReference>
<dbReference type="RefSeq" id="NP_001390842.1">
    <molecule id="O88454-1"/>
    <property type="nucleotide sequence ID" value="NM_001403913.1"/>
</dbReference>
<dbReference type="RefSeq" id="NP_032457.1">
    <molecule id="O88454-1"/>
    <property type="nucleotide sequence ID" value="NM_008431.4"/>
</dbReference>
<dbReference type="RefSeq" id="XP_006526783.1">
    <molecule id="O88454-1"/>
    <property type="nucleotide sequence ID" value="XM_006526720.4"/>
</dbReference>
<dbReference type="PDB" id="6PIS">
    <property type="method" value="X-ray"/>
    <property type="resolution" value="2.77 A"/>
    <property type="chains" value="A/B=1-275"/>
</dbReference>
<dbReference type="PDBsum" id="6PIS"/>
<dbReference type="SMR" id="O88454"/>
<dbReference type="FunCoup" id="O88454">
    <property type="interactions" value="7"/>
</dbReference>
<dbReference type="STRING" id="10090.ENSMUSP00000025908"/>
<dbReference type="TCDB" id="1.A.1.9.3">
    <property type="family name" value="the voltage-gated ion channel (vic) superfamily"/>
</dbReference>
<dbReference type="GlyCosmos" id="O88454">
    <property type="glycosylation" value="2 sites, No reported glycans"/>
</dbReference>
<dbReference type="GlyGen" id="O88454">
    <property type="glycosylation" value="2 sites"/>
</dbReference>
<dbReference type="iPTMnet" id="O88454"/>
<dbReference type="PhosphoSitePlus" id="O88454"/>
<dbReference type="PaxDb" id="10090-ENSMUSP00000025908"/>
<dbReference type="ProteomicsDB" id="269271">
    <molecule id="O88454-1"/>
</dbReference>
<dbReference type="ProteomicsDB" id="269272">
    <molecule id="O88454-2"/>
</dbReference>
<dbReference type="ABCD" id="O88454">
    <property type="antibodies" value="2 sequenced antibodies"/>
</dbReference>
<dbReference type="Antibodypedia" id="29251">
    <property type="antibodies" value="150 antibodies from 28 providers"/>
</dbReference>
<dbReference type="DNASU" id="16528"/>
<dbReference type="Ensembl" id="ENSMUST00000025908.8">
    <molecule id="O88454-1"/>
    <property type="protein sequence ID" value="ENSMUSP00000025908.7"/>
    <property type="gene ID" value="ENSMUSG00000024957.11"/>
</dbReference>
<dbReference type="Ensembl" id="ENSMUST00000237484.2">
    <molecule id="O88454-2"/>
    <property type="protein sequence ID" value="ENSMUSP00000157596.2"/>
    <property type="gene ID" value="ENSMUSG00000024957.11"/>
</dbReference>
<dbReference type="GeneID" id="16528"/>
<dbReference type="KEGG" id="mmu:16528"/>
<dbReference type="UCSC" id="uc008gjj.1">
    <molecule id="O88454-1"/>
    <property type="organism name" value="mouse"/>
</dbReference>
<dbReference type="AGR" id="MGI:1298234"/>
<dbReference type="CTD" id="50801"/>
<dbReference type="MGI" id="MGI:1298234">
    <property type="gene designation" value="Kcnk4"/>
</dbReference>
<dbReference type="VEuPathDB" id="HostDB:ENSMUSG00000024957"/>
<dbReference type="eggNOG" id="KOG1418">
    <property type="taxonomic scope" value="Eukaryota"/>
</dbReference>
<dbReference type="GeneTree" id="ENSGT00940000160310"/>
<dbReference type="HOGENOM" id="CLU_022504_1_1_1"/>
<dbReference type="InParanoid" id="O88454"/>
<dbReference type="OMA" id="VFLKWHV"/>
<dbReference type="PhylomeDB" id="O88454"/>
<dbReference type="TreeFam" id="TF313947"/>
<dbReference type="Reactome" id="R-MMU-1299503">
    <property type="pathway name" value="TWIK related potassium channel (TREK)"/>
</dbReference>
<dbReference type="Reactome" id="R-MMU-5576886">
    <property type="pathway name" value="Phase 4 - resting membrane potential"/>
</dbReference>
<dbReference type="BioGRID-ORCS" id="16528">
    <property type="hits" value="1 hit in 74 CRISPR screens"/>
</dbReference>
<dbReference type="ChiTaRS" id="Kcnk4">
    <property type="organism name" value="mouse"/>
</dbReference>
<dbReference type="PRO" id="PR:O88454"/>
<dbReference type="Proteomes" id="UP000000589">
    <property type="component" value="Chromosome 19"/>
</dbReference>
<dbReference type="RNAct" id="O88454">
    <property type="molecule type" value="protein"/>
</dbReference>
<dbReference type="Bgee" id="ENSMUSG00000024957">
    <property type="expression patterns" value="Expressed in primary visual cortex and 50 other cell types or tissues"/>
</dbReference>
<dbReference type="ExpressionAtlas" id="O88454">
    <property type="expression patterns" value="baseline and differential"/>
</dbReference>
<dbReference type="GO" id="GO:0033268">
    <property type="term" value="C:node of Ranvier"/>
    <property type="evidence" value="ECO:0000250"/>
    <property type="project" value="UniProtKB"/>
</dbReference>
<dbReference type="GO" id="GO:0005886">
    <property type="term" value="C:plasma membrane"/>
    <property type="evidence" value="ECO:0000250"/>
    <property type="project" value="UniProtKB"/>
</dbReference>
<dbReference type="GO" id="GO:0034705">
    <property type="term" value="C:potassium channel complex"/>
    <property type="evidence" value="ECO:0000250"/>
    <property type="project" value="UniProtKB"/>
</dbReference>
<dbReference type="GO" id="GO:0098782">
    <property type="term" value="F:mechanosensitive potassium channel activity"/>
    <property type="evidence" value="ECO:0000250"/>
    <property type="project" value="UniProtKB"/>
</dbReference>
<dbReference type="GO" id="GO:0046872">
    <property type="term" value="F:metal ion binding"/>
    <property type="evidence" value="ECO:0007669"/>
    <property type="project" value="UniProtKB-KW"/>
</dbReference>
<dbReference type="GO" id="GO:0015271">
    <property type="term" value="F:outward rectifier potassium channel activity"/>
    <property type="evidence" value="ECO:0000250"/>
    <property type="project" value="UniProtKB"/>
</dbReference>
<dbReference type="GO" id="GO:0005267">
    <property type="term" value="F:potassium channel activity"/>
    <property type="evidence" value="ECO:0000250"/>
    <property type="project" value="UniProtKB"/>
</dbReference>
<dbReference type="GO" id="GO:0022841">
    <property type="term" value="F:potassium ion leak channel activity"/>
    <property type="evidence" value="ECO:0000250"/>
    <property type="project" value="UniProtKB"/>
</dbReference>
<dbReference type="GO" id="GO:0097604">
    <property type="term" value="F:temperature-gated cation channel activity"/>
    <property type="evidence" value="ECO:0000250"/>
    <property type="project" value="UniProtKB"/>
</dbReference>
<dbReference type="GO" id="GO:0071468">
    <property type="term" value="P:cellular response to acidic pH"/>
    <property type="evidence" value="ECO:0000250"/>
    <property type="project" value="UniProtKB"/>
</dbReference>
<dbReference type="GO" id="GO:0071469">
    <property type="term" value="P:cellular response to alkaline pH"/>
    <property type="evidence" value="ECO:0000250"/>
    <property type="project" value="UniProtKB"/>
</dbReference>
<dbReference type="GO" id="GO:1904551">
    <property type="term" value="P:cellular response to arachidonate"/>
    <property type="evidence" value="ECO:0000250"/>
    <property type="project" value="UniProtKB"/>
</dbReference>
<dbReference type="GO" id="GO:0071398">
    <property type="term" value="P:cellular response to fatty acid"/>
    <property type="evidence" value="ECO:0000250"/>
    <property type="project" value="UniProtKB"/>
</dbReference>
<dbReference type="GO" id="GO:0071260">
    <property type="term" value="P:cellular response to mechanical stimulus"/>
    <property type="evidence" value="ECO:0000250"/>
    <property type="project" value="UniProtKB"/>
</dbReference>
<dbReference type="GO" id="GO:0071502">
    <property type="term" value="P:cellular response to temperature stimulus"/>
    <property type="evidence" value="ECO:0000250"/>
    <property type="project" value="UniProtKB"/>
</dbReference>
<dbReference type="GO" id="GO:0050976">
    <property type="term" value="P:detection of mechanical stimulus involved in sensory perception of touch"/>
    <property type="evidence" value="ECO:0000315"/>
    <property type="project" value="UniProtKB"/>
</dbReference>
<dbReference type="GO" id="GO:0019228">
    <property type="term" value="P:neuronal action potential"/>
    <property type="evidence" value="ECO:0000250"/>
    <property type="project" value="UniProtKB"/>
</dbReference>
<dbReference type="GO" id="GO:0071805">
    <property type="term" value="P:potassium ion transmembrane transport"/>
    <property type="evidence" value="ECO:0000250"/>
    <property type="project" value="UniProtKB"/>
</dbReference>
<dbReference type="GO" id="GO:1990478">
    <property type="term" value="P:response to ultrasound"/>
    <property type="evidence" value="ECO:0000250"/>
    <property type="project" value="UniProtKB"/>
</dbReference>
<dbReference type="GO" id="GO:0019233">
    <property type="term" value="P:sensory perception of pain"/>
    <property type="evidence" value="ECO:0000315"/>
    <property type="project" value="UniProtKB"/>
</dbReference>
<dbReference type="GO" id="GO:0050951">
    <property type="term" value="P:sensory perception of temperature stimulus"/>
    <property type="evidence" value="ECO:0000315"/>
    <property type="project" value="UniProtKB"/>
</dbReference>
<dbReference type="FunFam" id="1.10.287.70:FF:000106">
    <property type="entry name" value="Potassium channel subfamily K member 4"/>
    <property type="match status" value="1"/>
</dbReference>
<dbReference type="Gene3D" id="1.10.287.70">
    <property type="match status" value="1"/>
</dbReference>
<dbReference type="InterPro" id="IPR003280">
    <property type="entry name" value="2pore_dom_K_chnl"/>
</dbReference>
<dbReference type="InterPro" id="IPR008074">
    <property type="entry name" value="2pore_dom_K_chnl_TRAAK"/>
</dbReference>
<dbReference type="InterPro" id="IPR013099">
    <property type="entry name" value="K_chnl_dom"/>
</dbReference>
<dbReference type="PANTHER" id="PTHR11003:SF30">
    <property type="entry name" value="POTASSIUM CHANNEL SUBFAMILY K MEMBER 4"/>
    <property type="match status" value="1"/>
</dbReference>
<dbReference type="PANTHER" id="PTHR11003">
    <property type="entry name" value="POTASSIUM CHANNEL, SUBFAMILY K"/>
    <property type="match status" value="1"/>
</dbReference>
<dbReference type="Pfam" id="PF07885">
    <property type="entry name" value="Ion_trans_2"/>
    <property type="match status" value="2"/>
</dbReference>
<dbReference type="PRINTS" id="PR01333">
    <property type="entry name" value="2POREKCHANEL"/>
</dbReference>
<dbReference type="PRINTS" id="PR01691">
    <property type="entry name" value="TRAAKCHANNEL"/>
</dbReference>
<dbReference type="SUPFAM" id="SSF81324">
    <property type="entry name" value="Voltage-gated potassium channels"/>
    <property type="match status" value="2"/>
</dbReference>
<accession>O88454</accession>
<protein>
    <recommendedName>
        <fullName>Potassium channel subfamily K member 4</fullName>
    </recommendedName>
    <alternativeName>
        <fullName>TWIK-related arachidonic acid-stimulated potassium channel protein</fullName>
        <shortName evidence="11">TRAAK</shortName>
    </alternativeName>
</protein>
<name>KCNK4_MOUSE</name>
<reference key="1">
    <citation type="journal article" date="1998" name="EMBO J.">
        <title>A neuronal two P domain K+ channel stimulated by arachidonic acid and polyunsaturated fatty acids.</title>
        <authorList>
            <person name="Fink M."/>
            <person name="Lesage F."/>
            <person name="Duprat F."/>
            <person name="Heurteaux C."/>
            <person name="Reyes R."/>
            <person name="Fosset M."/>
            <person name="Lazdunski M."/>
        </authorList>
    </citation>
    <scope>NUCLEOTIDE SEQUENCE [MRNA]</scope>
    <scope>FUNCTION</scope>
    <scope>TRANSPORTER ACTIVITY</scope>
    <scope>ACTIVITY REGULATION</scope>
    <scope>SUBCELLULAR LOCATION</scope>
    <scope>TISSUE SPECIFICITY</scope>
    <source>
        <tissue>Brain</tissue>
    </source>
</reference>
<reference key="2">
    <citation type="journal article" date="1999" name="Nat. Neurosci.">
        <title>Inhalational anesthetics activate two-pore-domain background K+ channels.</title>
        <authorList>
            <person name="Patel A.J."/>
            <person name="Honore E."/>
            <person name="Lesage F."/>
            <person name="Fink M."/>
            <person name="Romey G."/>
            <person name="Lazdunski M."/>
        </authorList>
    </citation>
    <scope>ACTIVITY REGULATION</scope>
</reference>
<reference key="3">
    <citation type="journal article" date="2009" name="EMBO J.">
        <title>The mechano-activated K+ channels TRAAK and TREK-1 control both warm and cold perception.</title>
        <authorList>
            <person name="Noel J."/>
            <person name="Zimmermann K."/>
            <person name="Busserolles J."/>
            <person name="Deval E."/>
            <person name="Alloui A."/>
            <person name="Diochot S."/>
            <person name="Guy N."/>
            <person name="Borsotto M."/>
            <person name="Reeh P."/>
            <person name="Eschalier A."/>
            <person name="Lazdunski M."/>
        </authorList>
    </citation>
    <scope>FUNCTION</scope>
    <scope>DISRUPTION PHENOTYPE</scope>
</reference>
<reference key="4">
    <citation type="journal article" date="2016" name="Proc. Natl. Acad. Sci. U.S.A.">
        <title>Heterodimerization within the TREK channel subfamily produces a diverse family of highly regulated potassium channels.</title>
        <authorList>
            <person name="Levitz J."/>
            <person name="Royal P."/>
            <person name="Comoglio Y."/>
            <person name="Wdziekonski B."/>
            <person name="Schaub S."/>
            <person name="Clemens D.M."/>
            <person name="Isacoff E.Y."/>
            <person name="Sandoz G."/>
        </authorList>
    </citation>
    <scope>FUNCTION</scope>
    <scope>TRANSPORTER ACTIVITY</scope>
    <scope>ACTIVITY REGULATION</scope>
    <scope>SUBUNIT</scope>
    <scope>INTERACTION WITH KCNK2 AND KCNK10</scope>
</reference>
<reference key="5">
    <citation type="journal article" date="2016" name="Proc. Natl. Acad. Sci. U.S.A.">
        <title>Mixing and matching TREK/TRAAK subunits generate heterodimeric K2P channels with unique properties.</title>
        <authorList>
            <person name="Blin S."/>
            <person name="Ben Soussia I."/>
            <person name="Kim E.J."/>
            <person name="Brau F."/>
            <person name="Kang D."/>
            <person name="Lesage F."/>
            <person name="Bichet D."/>
        </authorList>
    </citation>
    <scope>FUNCTION</scope>
    <scope>TRANSPORTER ACTIVITY</scope>
    <scope>SUBUNIT</scope>
    <scope>INTERACTION WITH KCNK2 AND KCNK10</scope>
    <scope>TISSUE SPECIFICITY</scope>
    <scope>SUBCELLULAR LOCATION</scope>
    <scope>MUTAGENESIS OF GLY-106</scope>
</reference>